<sequence length="383" mass="41829">MTKRRVVVGMSGGVDSSVTAWLLKEQGYDVVGLFMKNWEDDDDGEYCSTRQDWIDVVSVADLIGIDVEAVNFAAEYKDRVFAEFLREYSAGRTPNPDVLCNAEIKFKAFLDHAMSLGAQTIATGHYARVRERDGRFELLKAFDHTKDQSYFLHRLNQAQLSKTMFPLGEIPKTRVREIAAQIGLPNAKKKDSTGICFIGERPFRDFLNRYLPTKPGPMKTPDGKTVGKHIGLAFYTFGQRKGIGLGGSKDGSGEPWFVAAKDIASNTLYVVQGHDHPWLRSRELVAGNVSWVAGEPPADGARCGAKTRYRQADAPCAFGRAAQAGDERFSLVFDEPQWAVTPGQSAVLYDGDVCLGGGIIESAATGRAGTAPAGRAPALVEAR</sequence>
<keyword id="KW-0067">ATP-binding</keyword>
<keyword id="KW-0963">Cytoplasm</keyword>
<keyword id="KW-1015">Disulfide bond</keyword>
<keyword id="KW-0547">Nucleotide-binding</keyword>
<keyword id="KW-0694">RNA-binding</keyword>
<keyword id="KW-0808">Transferase</keyword>
<keyword id="KW-0819">tRNA processing</keyword>
<keyword id="KW-0820">tRNA-binding</keyword>
<comment type="function">
    <text evidence="1">Catalyzes the 2-thiolation of uridine at the wobble position (U34) of tRNA, leading to the formation of s(2)U34.</text>
</comment>
<comment type="catalytic activity">
    <reaction evidence="1">
        <text>S-sulfanyl-L-cysteinyl-[protein] + uridine(34) in tRNA + AH2 + ATP = 2-thiouridine(34) in tRNA + L-cysteinyl-[protein] + A + AMP + diphosphate + H(+)</text>
        <dbReference type="Rhea" id="RHEA:47032"/>
        <dbReference type="Rhea" id="RHEA-COMP:10131"/>
        <dbReference type="Rhea" id="RHEA-COMP:11726"/>
        <dbReference type="Rhea" id="RHEA-COMP:11727"/>
        <dbReference type="Rhea" id="RHEA-COMP:11728"/>
        <dbReference type="ChEBI" id="CHEBI:13193"/>
        <dbReference type="ChEBI" id="CHEBI:15378"/>
        <dbReference type="ChEBI" id="CHEBI:17499"/>
        <dbReference type="ChEBI" id="CHEBI:29950"/>
        <dbReference type="ChEBI" id="CHEBI:30616"/>
        <dbReference type="ChEBI" id="CHEBI:33019"/>
        <dbReference type="ChEBI" id="CHEBI:61963"/>
        <dbReference type="ChEBI" id="CHEBI:65315"/>
        <dbReference type="ChEBI" id="CHEBI:87170"/>
        <dbReference type="ChEBI" id="CHEBI:456215"/>
        <dbReference type="EC" id="2.8.1.13"/>
    </reaction>
</comment>
<comment type="subcellular location">
    <subcellularLocation>
        <location evidence="1">Cytoplasm</location>
    </subcellularLocation>
</comment>
<comment type="similarity">
    <text evidence="1">Belongs to the MnmA/TRMU family.</text>
</comment>
<evidence type="ECO:0000255" key="1">
    <source>
        <dbReference type="HAMAP-Rule" id="MF_00144"/>
    </source>
</evidence>
<gene>
    <name evidence="1" type="primary">mnmA</name>
    <name type="ordered locus">BURPS1106A_3389</name>
</gene>
<feature type="chain" id="PRO_0000349560" description="tRNA-specific 2-thiouridylase MnmA">
    <location>
        <begin position="1"/>
        <end position="383"/>
    </location>
</feature>
<feature type="region of interest" description="Interaction with target base in tRNA" evidence="1">
    <location>
        <begin position="95"/>
        <end position="97"/>
    </location>
</feature>
<feature type="region of interest" description="Interaction with tRNA" evidence="1">
    <location>
        <begin position="146"/>
        <end position="148"/>
    </location>
</feature>
<feature type="region of interest" description="Interaction with tRNA" evidence="1">
    <location>
        <begin position="308"/>
        <end position="309"/>
    </location>
</feature>
<feature type="active site" description="Nucleophile" evidence="1">
    <location>
        <position position="100"/>
    </location>
</feature>
<feature type="active site" description="Cysteine persulfide intermediate" evidence="1">
    <location>
        <position position="196"/>
    </location>
</feature>
<feature type="binding site" evidence="1">
    <location>
        <begin position="9"/>
        <end position="16"/>
    </location>
    <ligand>
        <name>ATP</name>
        <dbReference type="ChEBI" id="CHEBI:30616"/>
    </ligand>
</feature>
<feature type="binding site" evidence="1">
    <location>
        <position position="35"/>
    </location>
    <ligand>
        <name>ATP</name>
        <dbReference type="ChEBI" id="CHEBI:30616"/>
    </ligand>
</feature>
<feature type="binding site" evidence="1">
    <location>
        <position position="124"/>
    </location>
    <ligand>
        <name>ATP</name>
        <dbReference type="ChEBI" id="CHEBI:30616"/>
    </ligand>
</feature>
<feature type="site" description="Interaction with tRNA" evidence="1">
    <location>
        <position position="125"/>
    </location>
</feature>
<feature type="site" description="Interaction with tRNA" evidence="1">
    <location>
        <position position="344"/>
    </location>
</feature>
<feature type="disulfide bond" description="Alternate" evidence="1">
    <location>
        <begin position="100"/>
        <end position="196"/>
    </location>
</feature>
<proteinExistence type="inferred from homology"/>
<protein>
    <recommendedName>
        <fullName evidence="1">tRNA-specific 2-thiouridylase MnmA</fullName>
        <ecNumber evidence="1">2.8.1.13</ecNumber>
    </recommendedName>
</protein>
<reference key="1">
    <citation type="journal article" date="2010" name="Genome Biol. Evol.">
        <title>Continuing evolution of Burkholderia mallei through genome reduction and large-scale rearrangements.</title>
        <authorList>
            <person name="Losada L."/>
            <person name="Ronning C.M."/>
            <person name="DeShazer D."/>
            <person name="Woods D."/>
            <person name="Fedorova N."/>
            <person name="Kim H.S."/>
            <person name="Shabalina S.A."/>
            <person name="Pearson T.R."/>
            <person name="Brinkac L."/>
            <person name="Tan P."/>
            <person name="Nandi T."/>
            <person name="Crabtree J."/>
            <person name="Badger J."/>
            <person name="Beckstrom-Sternberg S."/>
            <person name="Saqib M."/>
            <person name="Schutzer S.E."/>
            <person name="Keim P."/>
            <person name="Nierman W.C."/>
        </authorList>
    </citation>
    <scope>NUCLEOTIDE SEQUENCE [LARGE SCALE GENOMIC DNA]</scope>
    <source>
        <strain>1106a</strain>
    </source>
</reference>
<organism>
    <name type="scientific">Burkholderia pseudomallei (strain 1106a)</name>
    <dbReference type="NCBI Taxonomy" id="357348"/>
    <lineage>
        <taxon>Bacteria</taxon>
        <taxon>Pseudomonadati</taxon>
        <taxon>Pseudomonadota</taxon>
        <taxon>Betaproteobacteria</taxon>
        <taxon>Burkholderiales</taxon>
        <taxon>Burkholderiaceae</taxon>
        <taxon>Burkholderia</taxon>
        <taxon>pseudomallei group</taxon>
    </lineage>
</organism>
<accession>A3NZ55</accession>
<dbReference type="EC" id="2.8.1.13" evidence="1"/>
<dbReference type="EMBL" id="CP000572">
    <property type="protein sequence ID" value="ABN89137.1"/>
    <property type="molecule type" value="Genomic_DNA"/>
</dbReference>
<dbReference type="RefSeq" id="WP_004527719.1">
    <property type="nucleotide sequence ID" value="NC_009076.1"/>
</dbReference>
<dbReference type="SMR" id="A3NZ55"/>
<dbReference type="GeneID" id="93061484"/>
<dbReference type="KEGG" id="bpl:BURPS1106A_3389"/>
<dbReference type="HOGENOM" id="CLU_035188_1_0_4"/>
<dbReference type="Proteomes" id="UP000006738">
    <property type="component" value="Chromosome I"/>
</dbReference>
<dbReference type="GO" id="GO:0005737">
    <property type="term" value="C:cytoplasm"/>
    <property type="evidence" value="ECO:0007669"/>
    <property type="project" value="UniProtKB-SubCell"/>
</dbReference>
<dbReference type="GO" id="GO:0005524">
    <property type="term" value="F:ATP binding"/>
    <property type="evidence" value="ECO:0007669"/>
    <property type="project" value="UniProtKB-KW"/>
</dbReference>
<dbReference type="GO" id="GO:0000049">
    <property type="term" value="F:tRNA binding"/>
    <property type="evidence" value="ECO:0007669"/>
    <property type="project" value="UniProtKB-KW"/>
</dbReference>
<dbReference type="GO" id="GO:0103016">
    <property type="term" value="F:tRNA-uridine 2-sulfurtransferase activity"/>
    <property type="evidence" value="ECO:0007669"/>
    <property type="project" value="UniProtKB-EC"/>
</dbReference>
<dbReference type="GO" id="GO:0002143">
    <property type="term" value="P:tRNA wobble position uridine thiolation"/>
    <property type="evidence" value="ECO:0007669"/>
    <property type="project" value="TreeGrafter"/>
</dbReference>
<dbReference type="CDD" id="cd01998">
    <property type="entry name" value="MnmA_TRMU-like"/>
    <property type="match status" value="1"/>
</dbReference>
<dbReference type="FunFam" id="2.30.30.280:FF:000001">
    <property type="entry name" value="tRNA-specific 2-thiouridylase MnmA"/>
    <property type="match status" value="1"/>
</dbReference>
<dbReference type="FunFam" id="2.40.30.10:FF:000023">
    <property type="entry name" value="tRNA-specific 2-thiouridylase MnmA"/>
    <property type="match status" value="1"/>
</dbReference>
<dbReference type="FunFam" id="3.40.50.620:FF:000004">
    <property type="entry name" value="tRNA-specific 2-thiouridylase MnmA"/>
    <property type="match status" value="1"/>
</dbReference>
<dbReference type="Gene3D" id="2.30.30.280">
    <property type="entry name" value="Adenine nucleotide alpha hydrolases-like domains"/>
    <property type="match status" value="1"/>
</dbReference>
<dbReference type="Gene3D" id="3.40.50.620">
    <property type="entry name" value="HUPs"/>
    <property type="match status" value="1"/>
</dbReference>
<dbReference type="Gene3D" id="2.40.30.10">
    <property type="entry name" value="Translation factors"/>
    <property type="match status" value="1"/>
</dbReference>
<dbReference type="HAMAP" id="MF_00144">
    <property type="entry name" value="tRNA_thiouridyl_MnmA"/>
    <property type="match status" value="1"/>
</dbReference>
<dbReference type="InterPro" id="IPR004506">
    <property type="entry name" value="MnmA-like"/>
</dbReference>
<dbReference type="InterPro" id="IPR046885">
    <property type="entry name" value="MnmA-like_C"/>
</dbReference>
<dbReference type="InterPro" id="IPR046884">
    <property type="entry name" value="MnmA-like_central"/>
</dbReference>
<dbReference type="InterPro" id="IPR023382">
    <property type="entry name" value="MnmA-like_central_sf"/>
</dbReference>
<dbReference type="InterPro" id="IPR014729">
    <property type="entry name" value="Rossmann-like_a/b/a_fold"/>
</dbReference>
<dbReference type="NCBIfam" id="NF001138">
    <property type="entry name" value="PRK00143.1"/>
    <property type="match status" value="1"/>
</dbReference>
<dbReference type="NCBIfam" id="TIGR00420">
    <property type="entry name" value="trmU"/>
    <property type="match status" value="1"/>
</dbReference>
<dbReference type="PANTHER" id="PTHR11933:SF5">
    <property type="entry name" value="MITOCHONDRIAL TRNA-SPECIFIC 2-THIOURIDYLASE 1"/>
    <property type="match status" value="1"/>
</dbReference>
<dbReference type="PANTHER" id="PTHR11933">
    <property type="entry name" value="TRNA 5-METHYLAMINOMETHYL-2-THIOURIDYLATE -METHYLTRANSFERASE"/>
    <property type="match status" value="1"/>
</dbReference>
<dbReference type="Pfam" id="PF03054">
    <property type="entry name" value="tRNA_Me_trans"/>
    <property type="match status" value="1"/>
</dbReference>
<dbReference type="Pfam" id="PF20258">
    <property type="entry name" value="tRNA_Me_trans_C"/>
    <property type="match status" value="1"/>
</dbReference>
<dbReference type="Pfam" id="PF20259">
    <property type="entry name" value="tRNA_Me_trans_M"/>
    <property type="match status" value="1"/>
</dbReference>
<dbReference type="SUPFAM" id="SSF52402">
    <property type="entry name" value="Adenine nucleotide alpha hydrolases-like"/>
    <property type="match status" value="1"/>
</dbReference>
<name>MNMA_BURP0</name>